<reference key="1">
    <citation type="submission" date="2011-05" db="EMBL/GenBank/DDBJ databases">
        <title>Complete sequence of Methanobacterium sp. SWAN-1.</title>
        <authorList>
            <person name="Lucas S."/>
            <person name="Han J."/>
            <person name="Lapidus A."/>
            <person name="Cheng J.-F."/>
            <person name="Goodwin L."/>
            <person name="Pitluck S."/>
            <person name="Peters L."/>
            <person name="Ovchinnikova G."/>
            <person name="Chertkov O."/>
            <person name="Han C."/>
            <person name="Tapia R."/>
            <person name="Land M."/>
            <person name="Hauser L."/>
            <person name="Kyrpides N."/>
            <person name="Ivanova N."/>
            <person name="Pagani I."/>
            <person name="Cadillo-Quiroz H."/>
            <person name="Imachi H."/>
            <person name="Zinder S."/>
            <person name="Liu W."/>
            <person name="Woyke T."/>
        </authorList>
    </citation>
    <scope>NUCLEOTIDE SEQUENCE [LARGE SCALE GENOMIC DNA]</scope>
    <source>
        <strain>DSM 25820 / JCM 18151 / SWAN1</strain>
    </source>
</reference>
<comment type="function">
    <text evidence="1">Catalyzes a salvage reaction resulting in the formation of IMP that is energically less costly than de novo synthesis.</text>
</comment>
<comment type="catalytic activity">
    <reaction evidence="1">
        <text>IMP + diphosphate = hypoxanthine + 5-phospho-alpha-D-ribose 1-diphosphate</text>
        <dbReference type="Rhea" id="RHEA:17973"/>
        <dbReference type="ChEBI" id="CHEBI:17368"/>
        <dbReference type="ChEBI" id="CHEBI:33019"/>
        <dbReference type="ChEBI" id="CHEBI:58017"/>
        <dbReference type="ChEBI" id="CHEBI:58053"/>
        <dbReference type="EC" id="2.4.2.8"/>
    </reaction>
</comment>
<comment type="catalytic activity">
    <reaction evidence="1">
        <text>GMP + diphosphate = guanine + 5-phospho-alpha-D-ribose 1-diphosphate</text>
        <dbReference type="Rhea" id="RHEA:25424"/>
        <dbReference type="ChEBI" id="CHEBI:16235"/>
        <dbReference type="ChEBI" id="CHEBI:33019"/>
        <dbReference type="ChEBI" id="CHEBI:58017"/>
        <dbReference type="ChEBI" id="CHEBI:58115"/>
        <dbReference type="EC" id="2.4.2.8"/>
    </reaction>
</comment>
<comment type="pathway">
    <text evidence="1">Purine metabolism; IMP biosynthesis via salvage pathway; IMP from hypoxanthine: step 1/1.</text>
</comment>
<comment type="subunit">
    <text evidence="1">Homodimer.</text>
</comment>
<comment type="subcellular location">
    <subcellularLocation>
        <location evidence="1">Cytoplasm</location>
    </subcellularLocation>
</comment>
<comment type="similarity">
    <text evidence="1">Belongs to the purine/pyrimidine phosphoribosyltransferase family. Archaeal HPRT subfamily.</text>
</comment>
<name>HPRT_METPW</name>
<proteinExistence type="inferred from homology"/>
<accession>F6D512</accession>
<evidence type="ECO:0000255" key="1">
    <source>
        <dbReference type="HAMAP-Rule" id="MF_01467"/>
    </source>
</evidence>
<sequence>MFEKLKKSLIEAPVVKKGDYDYFVHPITDGVPLVVPEILEEVADGVSKFGNMNVDKIVCVEAMGIHIATALSLKTGIPFVVVRKRSYGLEGEVAVHQMTGYSEGELYINGLNSGDRIILVDDVVSTGGTMIAVLKALKAIKVDIVDVMAVIEKGKGKCIVEDATGVTVRSLVKLNVVNGKVVIKGSIDES</sequence>
<organism>
    <name type="scientific">Methanobacterium paludis (strain DSM 25820 / JCM 18151 / SWAN1)</name>
    <dbReference type="NCBI Taxonomy" id="868131"/>
    <lineage>
        <taxon>Archaea</taxon>
        <taxon>Methanobacteriati</taxon>
        <taxon>Methanobacteriota</taxon>
        <taxon>Methanomada group</taxon>
        <taxon>Methanobacteria</taxon>
        <taxon>Methanobacteriales</taxon>
        <taxon>Methanobacteriaceae</taxon>
        <taxon>Methanobacterium</taxon>
    </lineage>
</organism>
<feature type="chain" id="PRO_0000415464" description="Hypoxanthine/guanine phosphoribosyltransferase">
    <location>
        <begin position="1"/>
        <end position="190"/>
    </location>
</feature>
<keyword id="KW-0963">Cytoplasm</keyword>
<keyword id="KW-0328">Glycosyltransferase</keyword>
<keyword id="KW-0660">Purine salvage</keyword>
<keyword id="KW-0808">Transferase</keyword>
<protein>
    <recommendedName>
        <fullName evidence="1">Hypoxanthine/guanine phosphoribosyltransferase</fullName>
        <shortName evidence="1">HGPRTase</shortName>
        <ecNumber evidence="1">2.4.2.8</ecNumber>
    </recommendedName>
</protein>
<gene>
    <name evidence="1" type="primary">hpt</name>
    <name type="ordered locus">MSWAN_2285</name>
</gene>
<dbReference type="EC" id="2.4.2.8" evidence="1"/>
<dbReference type="EMBL" id="CP002772">
    <property type="protein sequence ID" value="AEG19291.1"/>
    <property type="molecule type" value="Genomic_DNA"/>
</dbReference>
<dbReference type="RefSeq" id="WP_013826790.1">
    <property type="nucleotide sequence ID" value="NC_015574.1"/>
</dbReference>
<dbReference type="SMR" id="F6D512"/>
<dbReference type="STRING" id="868131.MSWAN_2285"/>
<dbReference type="GeneID" id="10669814"/>
<dbReference type="KEGG" id="mew:MSWAN_2285"/>
<dbReference type="eggNOG" id="arCOG00030">
    <property type="taxonomic scope" value="Archaea"/>
</dbReference>
<dbReference type="HOGENOM" id="CLU_126376_0_0_2"/>
<dbReference type="OrthoDB" id="8323at2157"/>
<dbReference type="UniPathway" id="UPA00591">
    <property type="reaction ID" value="UER00648"/>
</dbReference>
<dbReference type="Proteomes" id="UP000009231">
    <property type="component" value="Chromosome"/>
</dbReference>
<dbReference type="GO" id="GO:0005737">
    <property type="term" value="C:cytoplasm"/>
    <property type="evidence" value="ECO:0007669"/>
    <property type="project" value="UniProtKB-SubCell"/>
</dbReference>
<dbReference type="GO" id="GO:0052657">
    <property type="term" value="F:guanine phosphoribosyltransferase activity"/>
    <property type="evidence" value="ECO:0007669"/>
    <property type="project" value="RHEA"/>
</dbReference>
<dbReference type="GO" id="GO:0004422">
    <property type="term" value="F:hypoxanthine phosphoribosyltransferase activity"/>
    <property type="evidence" value="ECO:0007669"/>
    <property type="project" value="UniProtKB-UniRule"/>
</dbReference>
<dbReference type="GO" id="GO:0032264">
    <property type="term" value="P:IMP salvage"/>
    <property type="evidence" value="ECO:0007669"/>
    <property type="project" value="UniProtKB-UniRule"/>
</dbReference>
<dbReference type="GO" id="GO:0006166">
    <property type="term" value="P:purine ribonucleoside salvage"/>
    <property type="evidence" value="ECO:0007669"/>
    <property type="project" value="UniProtKB-KW"/>
</dbReference>
<dbReference type="CDD" id="cd06223">
    <property type="entry name" value="PRTases_typeI"/>
    <property type="match status" value="1"/>
</dbReference>
<dbReference type="Gene3D" id="3.40.50.2020">
    <property type="match status" value="1"/>
</dbReference>
<dbReference type="HAMAP" id="MF_01467">
    <property type="entry name" value="Hypx_phosphoribosyltr"/>
    <property type="match status" value="1"/>
</dbReference>
<dbReference type="InterPro" id="IPR026597">
    <property type="entry name" value="HGPRTase-like"/>
</dbReference>
<dbReference type="InterPro" id="IPR000836">
    <property type="entry name" value="PRibTrfase_dom"/>
</dbReference>
<dbReference type="InterPro" id="IPR029057">
    <property type="entry name" value="PRTase-like"/>
</dbReference>
<dbReference type="InterPro" id="IPR050118">
    <property type="entry name" value="Pur/Pyrimidine_PRTase"/>
</dbReference>
<dbReference type="NCBIfam" id="NF040646">
    <property type="entry name" value="HPT_Archaea"/>
    <property type="match status" value="1"/>
</dbReference>
<dbReference type="NCBIfam" id="NF002635">
    <property type="entry name" value="PRK02304.1-4"/>
    <property type="match status" value="1"/>
</dbReference>
<dbReference type="PANTHER" id="PTHR43864">
    <property type="entry name" value="HYPOXANTHINE/GUANINE PHOSPHORIBOSYLTRANSFERASE"/>
    <property type="match status" value="1"/>
</dbReference>
<dbReference type="PANTHER" id="PTHR43864:SF1">
    <property type="entry name" value="XANTHINE PHOSPHORIBOSYLTRANSFERASE"/>
    <property type="match status" value="1"/>
</dbReference>
<dbReference type="Pfam" id="PF00156">
    <property type="entry name" value="Pribosyltran"/>
    <property type="match status" value="1"/>
</dbReference>
<dbReference type="SUPFAM" id="SSF53271">
    <property type="entry name" value="PRTase-like"/>
    <property type="match status" value="1"/>
</dbReference>
<dbReference type="PROSITE" id="PS00103">
    <property type="entry name" value="PUR_PYR_PR_TRANSFER"/>
    <property type="match status" value="1"/>
</dbReference>